<accession>Q8NCT1</accession>
<accession>Q6NSI9</accession>
<evidence type="ECO:0000250" key="1">
    <source>
        <dbReference type="UniProtKB" id="A0A0B4J1F4"/>
    </source>
</evidence>
<evidence type="ECO:0000269" key="2">
    <source>
    </source>
</evidence>
<evidence type="ECO:0000269" key="3">
    <source>
    </source>
</evidence>
<evidence type="ECO:0000269" key="4">
    <source>
    </source>
</evidence>
<evidence type="ECO:0000269" key="5">
    <source>
    </source>
</evidence>
<evidence type="ECO:0000269" key="6">
    <source>
    </source>
</evidence>
<evidence type="ECO:0000269" key="7">
    <source>
    </source>
</evidence>
<evidence type="ECO:0000305" key="8"/>
<feature type="chain" id="PRO_0000244353" description="Arrestin domain-containing protein 4">
    <location>
        <begin position="1"/>
        <end position="418"/>
    </location>
</feature>
<feature type="short sequence motif" description="PPxY motif 1" evidence="8">
    <location>
        <begin position="350"/>
        <end position="353"/>
    </location>
</feature>
<feature type="short sequence motif" description="PPxY motif 2" evidence="8">
    <location>
        <begin position="395"/>
        <end position="398"/>
    </location>
</feature>
<feature type="sequence variant" id="VAR_026899" description="In dbSNP:rs12101554." evidence="2">
    <original>T</original>
    <variation>A</variation>
    <location>
        <position position="79"/>
    </location>
</feature>
<feature type="sequence variant" id="VAR_026900" description="In dbSNP:rs17856817." evidence="2">
    <original>P</original>
    <variation>S</variation>
    <location>
        <position position="347"/>
    </location>
</feature>
<feature type="sequence variant" id="VAR_026901" description="In dbSNP:rs2130882." evidence="2">
    <original>S</original>
    <variation>P</variation>
    <location>
        <position position="358"/>
    </location>
</feature>
<organism>
    <name type="scientific">Homo sapiens</name>
    <name type="common">Human</name>
    <dbReference type="NCBI Taxonomy" id="9606"/>
    <lineage>
        <taxon>Eukaryota</taxon>
        <taxon>Metazoa</taxon>
        <taxon>Chordata</taxon>
        <taxon>Craniata</taxon>
        <taxon>Vertebrata</taxon>
        <taxon>Euteleostomi</taxon>
        <taxon>Mammalia</taxon>
        <taxon>Eutheria</taxon>
        <taxon>Euarchontoglires</taxon>
        <taxon>Primates</taxon>
        <taxon>Haplorrhini</taxon>
        <taxon>Catarrhini</taxon>
        <taxon>Hominidae</taxon>
        <taxon>Homo</taxon>
    </lineage>
</organism>
<protein>
    <recommendedName>
        <fullName>Arrestin domain-containing protein 4</fullName>
    </recommendedName>
</protein>
<gene>
    <name type="primary">ARRDC4</name>
</gene>
<keyword id="KW-1003">Cell membrane</keyword>
<keyword id="KW-0968">Cytoplasmic vesicle</keyword>
<keyword id="KW-0967">Endosome</keyword>
<keyword id="KW-0472">Membrane</keyword>
<keyword id="KW-1267">Proteomics identification</keyword>
<keyword id="KW-1185">Reference proteome</keyword>
<keyword id="KW-0677">Repeat</keyword>
<comment type="function">
    <text evidence="1 3 7 8">Functions as an adapter recruiting ubiquitin-protein ligases to their specific substrates (By similarity). Plays a role in endocytosis of activated G protein-coupled receptors (GPCRs) (Probable). Through an ubiquitination-dependent mechanism also plays a role in the incorporation of SLC11A2 into extracellular vesicles (By similarity). May play a role in glucose uptake (PubMed:19605364). Participates in innate immune response by promoting IFIH1/MDA5 activation through interaction with TRIM65 (PubMed:28594402).</text>
</comment>
<comment type="subunit">
    <text evidence="1 4 5 6 7">Interacts with ADRB2 (PubMed:21982743, PubMed:23208550). Interacts (via PPxY motifs) with ITCH, NEDD4L and WWP2 (PubMed:23236378). Interacts with AVPR2. Identified in a complex containing at least ARRDC4, AVPR2 and HGS (PubMed:23236378). Interacts with SLC11A2; controls the incorporation of SLC11A2 into extracellular vesicles through an ubiquitination-dependent mechanism (By similarity). Interacts with TRIM65 (PubMed:28594402).</text>
</comment>
<comment type="interaction">
    <interactant intactId="EBI-11673273">
        <id>Q8NCT1</id>
    </interactant>
    <interactant intactId="EBI-11675746">
        <id>P30518</id>
        <label>AVPR2</label>
    </interactant>
    <organismsDiffer>false</organismsDiffer>
    <experiments>2</experiments>
</comment>
<comment type="subcellular location">
    <subcellularLocation>
        <location evidence="5">Early endosome</location>
    </subcellularLocation>
    <subcellularLocation>
        <location evidence="5 6">Cell membrane</location>
        <topology evidence="8">Peripheral membrane protein</topology>
        <orientation evidence="8">Cytoplasmic side</orientation>
    </subcellularLocation>
    <subcellularLocation>
        <location evidence="6">Cytoplasmic vesicle</location>
    </subcellularLocation>
    <text evidence="1">Also found in extracellular vesicles different from exosomes.</text>
</comment>
<comment type="similarity">
    <text evidence="8">Belongs to the arrestin family.</text>
</comment>
<dbReference type="EMBL" id="AC024651">
    <property type="status" value="NOT_ANNOTATED_CDS"/>
    <property type="molecule type" value="Genomic_DNA"/>
</dbReference>
<dbReference type="EMBL" id="BC028704">
    <property type="protein sequence ID" value="AAH28704.2"/>
    <property type="molecule type" value="mRNA"/>
</dbReference>
<dbReference type="EMBL" id="BC070100">
    <property type="protein sequence ID" value="AAH70100.1"/>
    <property type="molecule type" value="mRNA"/>
</dbReference>
<dbReference type="CCDS" id="CCDS10377.1"/>
<dbReference type="RefSeq" id="NP_899232.2">
    <property type="nucleotide sequence ID" value="NM_183376.3"/>
</dbReference>
<dbReference type="SMR" id="Q8NCT1"/>
<dbReference type="BioGRID" id="124894">
    <property type="interactions" value="82"/>
</dbReference>
<dbReference type="CORUM" id="Q8NCT1"/>
<dbReference type="FunCoup" id="Q8NCT1">
    <property type="interactions" value="1054"/>
</dbReference>
<dbReference type="IntAct" id="Q8NCT1">
    <property type="interactions" value="76"/>
</dbReference>
<dbReference type="STRING" id="9606.ENSP00000268042"/>
<dbReference type="iPTMnet" id="Q8NCT1"/>
<dbReference type="PhosphoSitePlus" id="Q8NCT1"/>
<dbReference type="BioMuta" id="ARRDC4"/>
<dbReference type="DMDM" id="296439437"/>
<dbReference type="MassIVE" id="Q8NCT1"/>
<dbReference type="PaxDb" id="9606-ENSP00000268042"/>
<dbReference type="PeptideAtlas" id="Q8NCT1"/>
<dbReference type="Antibodypedia" id="51203">
    <property type="antibodies" value="121 antibodies from 22 providers"/>
</dbReference>
<dbReference type="DNASU" id="91947"/>
<dbReference type="Ensembl" id="ENST00000268042.7">
    <property type="protein sequence ID" value="ENSP00000268042.6"/>
    <property type="gene ID" value="ENSG00000140450.9"/>
</dbReference>
<dbReference type="GeneID" id="91947"/>
<dbReference type="KEGG" id="hsa:91947"/>
<dbReference type="MANE-Select" id="ENST00000268042.7">
    <property type="protein sequence ID" value="ENSP00000268042.6"/>
    <property type="RefSeq nucleotide sequence ID" value="NM_183376.3"/>
    <property type="RefSeq protein sequence ID" value="NP_899232.2"/>
</dbReference>
<dbReference type="UCSC" id="uc010bom.4">
    <property type="organism name" value="human"/>
</dbReference>
<dbReference type="AGR" id="HGNC:28087"/>
<dbReference type="CTD" id="91947"/>
<dbReference type="DisGeNET" id="91947"/>
<dbReference type="GeneCards" id="ARRDC4"/>
<dbReference type="HGNC" id="HGNC:28087">
    <property type="gene designation" value="ARRDC4"/>
</dbReference>
<dbReference type="HPA" id="ENSG00000140450">
    <property type="expression patterns" value="Tissue enhanced (brain)"/>
</dbReference>
<dbReference type="MIM" id="619788">
    <property type="type" value="gene"/>
</dbReference>
<dbReference type="neXtProt" id="NX_Q8NCT1"/>
<dbReference type="OpenTargets" id="ENSG00000140450"/>
<dbReference type="PharmGKB" id="PA134895338"/>
<dbReference type="VEuPathDB" id="HostDB:ENSG00000140450"/>
<dbReference type="eggNOG" id="KOG3780">
    <property type="taxonomic scope" value="Eukaryota"/>
</dbReference>
<dbReference type="GeneTree" id="ENSGT00940000160523"/>
<dbReference type="HOGENOM" id="CLU_039221_1_1_1"/>
<dbReference type="InParanoid" id="Q8NCT1"/>
<dbReference type="OMA" id="RQTQDKM"/>
<dbReference type="OrthoDB" id="2333384at2759"/>
<dbReference type="PAN-GO" id="Q8NCT1">
    <property type="GO annotations" value="4 GO annotations based on evolutionary models"/>
</dbReference>
<dbReference type="PhylomeDB" id="Q8NCT1"/>
<dbReference type="TreeFam" id="TF313650"/>
<dbReference type="PathwayCommons" id="Q8NCT1"/>
<dbReference type="SignaLink" id="Q8NCT1"/>
<dbReference type="BioGRID-ORCS" id="91947">
    <property type="hits" value="14 hits in 1150 CRISPR screens"/>
</dbReference>
<dbReference type="GenomeRNAi" id="91947"/>
<dbReference type="Pharos" id="Q8NCT1">
    <property type="development level" value="Tbio"/>
</dbReference>
<dbReference type="PRO" id="PR:Q8NCT1"/>
<dbReference type="Proteomes" id="UP000005640">
    <property type="component" value="Chromosome 15"/>
</dbReference>
<dbReference type="RNAct" id="Q8NCT1">
    <property type="molecule type" value="protein"/>
</dbReference>
<dbReference type="Bgee" id="ENSG00000140450">
    <property type="expression patterns" value="Expressed in upper leg skin and 188 other cell types or tissues"/>
</dbReference>
<dbReference type="ExpressionAtlas" id="Q8NCT1">
    <property type="expression patterns" value="baseline and differential"/>
</dbReference>
<dbReference type="GO" id="GO:0005737">
    <property type="term" value="C:cytoplasm"/>
    <property type="evidence" value="ECO:0000318"/>
    <property type="project" value="GO_Central"/>
</dbReference>
<dbReference type="GO" id="GO:0005769">
    <property type="term" value="C:early endosome"/>
    <property type="evidence" value="ECO:0007669"/>
    <property type="project" value="UniProtKB-SubCell"/>
</dbReference>
<dbReference type="GO" id="GO:0005768">
    <property type="term" value="C:endosome"/>
    <property type="evidence" value="ECO:0000314"/>
    <property type="project" value="MGI"/>
</dbReference>
<dbReference type="GO" id="GO:1903561">
    <property type="term" value="C:extracellular vesicle"/>
    <property type="evidence" value="ECO:0000250"/>
    <property type="project" value="UniProtKB"/>
</dbReference>
<dbReference type="GO" id="GO:0043231">
    <property type="term" value="C:intracellular membrane-bounded organelle"/>
    <property type="evidence" value="ECO:0000314"/>
    <property type="project" value="HPA"/>
</dbReference>
<dbReference type="GO" id="GO:0005886">
    <property type="term" value="C:plasma membrane"/>
    <property type="evidence" value="ECO:0000314"/>
    <property type="project" value="MGI"/>
</dbReference>
<dbReference type="GO" id="GO:1990756">
    <property type="term" value="F:ubiquitin-like ligase-substrate adaptor activity"/>
    <property type="evidence" value="ECO:0000314"/>
    <property type="project" value="UniProt"/>
</dbReference>
<dbReference type="GO" id="GO:0140112">
    <property type="term" value="P:extracellular vesicle biogenesis"/>
    <property type="evidence" value="ECO:0000250"/>
    <property type="project" value="UniProtKB"/>
</dbReference>
<dbReference type="GO" id="GO:0032728">
    <property type="term" value="P:positive regulation of interferon-beta production"/>
    <property type="evidence" value="ECO:0000314"/>
    <property type="project" value="UniProt"/>
</dbReference>
<dbReference type="GO" id="GO:0051443">
    <property type="term" value="P:positive regulation of ubiquitin-protein transferase activity"/>
    <property type="evidence" value="ECO:0000353"/>
    <property type="project" value="MGI"/>
</dbReference>
<dbReference type="GO" id="GO:0070534">
    <property type="term" value="P:protein K63-linked ubiquitination"/>
    <property type="evidence" value="ECO:0000314"/>
    <property type="project" value="UniProt"/>
</dbReference>
<dbReference type="GO" id="GO:0015031">
    <property type="term" value="P:protein transport"/>
    <property type="evidence" value="ECO:0000250"/>
    <property type="project" value="UniProtKB"/>
</dbReference>
<dbReference type="GO" id="GO:0016567">
    <property type="term" value="P:protein ubiquitination"/>
    <property type="evidence" value="ECO:0000250"/>
    <property type="project" value="UniProtKB"/>
</dbReference>
<dbReference type="FunFam" id="2.60.40.640:FF:000005">
    <property type="entry name" value="Arrestin domain-containing protein 3"/>
    <property type="match status" value="1"/>
</dbReference>
<dbReference type="FunFam" id="2.60.40.640:FF:000007">
    <property type="entry name" value="Arrestin domain-containing protein 3 mRNA"/>
    <property type="match status" value="1"/>
</dbReference>
<dbReference type="Gene3D" id="2.60.40.640">
    <property type="match status" value="2"/>
</dbReference>
<dbReference type="InterPro" id="IPR014752">
    <property type="entry name" value="Arrestin-like_C"/>
</dbReference>
<dbReference type="InterPro" id="IPR011021">
    <property type="entry name" value="Arrestin-like_N"/>
</dbReference>
<dbReference type="InterPro" id="IPR011022">
    <property type="entry name" value="Arrestin_C-like"/>
</dbReference>
<dbReference type="InterPro" id="IPR050357">
    <property type="entry name" value="Arrestin_domain-protein"/>
</dbReference>
<dbReference type="InterPro" id="IPR014756">
    <property type="entry name" value="Ig_E-set"/>
</dbReference>
<dbReference type="PANTHER" id="PTHR11188">
    <property type="entry name" value="ARRESTIN DOMAIN CONTAINING PROTEIN"/>
    <property type="match status" value="1"/>
</dbReference>
<dbReference type="PANTHER" id="PTHR11188:SF16">
    <property type="entry name" value="ARRESTIN DOMAIN-CONTAINING PROTEIN 4"/>
    <property type="match status" value="1"/>
</dbReference>
<dbReference type="Pfam" id="PF02752">
    <property type="entry name" value="Arrestin_C"/>
    <property type="match status" value="1"/>
</dbReference>
<dbReference type="Pfam" id="PF00339">
    <property type="entry name" value="Arrestin_N"/>
    <property type="match status" value="1"/>
</dbReference>
<dbReference type="SMART" id="SM01017">
    <property type="entry name" value="Arrestin_C"/>
    <property type="match status" value="1"/>
</dbReference>
<dbReference type="SUPFAM" id="SSF81296">
    <property type="entry name" value="E set domains"/>
    <property type="match status" value="2"/>
</dbReference>
<name>ARRD4_HUMAN</name>
<sequence length="418" mass="45479">MGGEAGCAAAVGAEGRVKSLGLVFEDERKGCYSSGETVAGHVLLEASEPVALRALRLEAQGRATAAWGPSTCPRASASTAALAVFSEVEYLNVRLSLREPPAGEGIILLQPGKHEFPFRFQLPSEPLVTSFTGKYGSIQYCVRAVLERPKVPDQSVKRELQVVSHVDVNTPALLTPVLKTQEKMVGCWFFTSGPVSLSAKIERKGYCNGEAIPIYAEIENCSSRLIVPKAAIFQTQTYLASGKTKTIRHMVANVRGNHIASGSTDTWNGKTLKIPPVTPSILDCCIIRVDYSLAVYIHIPGAKKLMLELPLVIGTIPYNGFGSRNSSIASQFSMDMSWLTLTLPEQPEAPPNYADVVSEEEFSRHIPPYPQPPNCEGEVCCPVFACIQEFRFQPPPLYSEVDPHPSDVEESQPVSFIL</sequence>
<proteinExistence type="evidence at protein level"/>
<reference key="1">
    <citation type="journal article" date="2006" name="Nature">
        <title>Analysis of the DNA sequence and duplication history of human chromosome 15.</title>
        <authorList>
            <person name="Zody M.C."/>
            <person name="Garber M."/>
            <person name="Sharpe T."/>
            <person name="Young S.K."/>
            <person name="Rowen L."/>
            <person name="O'Neill K."/>
            <person name="Whittaker C.A."/>
            <person name="Kamal M."/>
            <person name="Chang J.L."/>
            <person name="Cuomo C.A."/>
            <person name="Dewar K."/>
            <person name="FitzGerald M.G."/>
            <person name="Kodira C.D."/>
            <person name="Madan A."/>
            <person name="Qin S."/>
            <person name="Yang X."/>
            <person name="Abbasi N."/>
            <person name="Abouelleil A."/>
            <person name="Arachchi H.M."/>
            <person name="Baradarani L."/>
            <person name="Birditt B."/>
            <person name="Bloom S."/>
            <person name="Bloom T."/>
            <person name="Borowsky M.L."/>
            <person name="Burke J."/>
            <person name="Butler J."/>
            <person name="Cook A."/>
            <person name="DeArellano K."/>
            <person name="DeCaprio D."/>
            <person name="Dorris L. III"/>
            <person name="Dors M."/>
            <person name="Eichler E.E."/>
            <person name="Engels R."/>
            <person name="Fahey J."/>
            <person name="Fleetwood P."/>
            <person name="Friedman C."/>
            <person name="Gearin G."/>
            <person name="Hall J.L."/>
            <person name="Hensley G."/>
            <person name="Johnson E."/>
            <person name="Jones C."/>
            <person name="Kamat A."/>
            <person name="Kaur A."/>
            <person name="Locke D.P."/>
            <person name="Madan A."/>
            <person name="Munson G."/>
            <person name="Jaffe D.B."/>
            <person name="Lui A."/>
            <person name="Macdonald P."/>
            <person name="Mauceli E."/>
            <person name="Naylor J.W."/>
            <person name="Nesbitt R."/>
            <person name="Nicol R."/>
            <person name="O'Leary S.B."/>
            <person name="Ratcliffe A."/>
            <person name="Rounsley S."/>
            <person name="She X."/>
            <person name="Sneddon K.M.B."/>
            <person name="Stewart S."/>
            <person name="Sougnez C."/>
            <person name="Stone S.M."/>
            <person name="Topham K."/>
            <person name="Vincent D."/>
            <person name="Wang S."/>
            <person name="Zimmer A.R."/>
            <person name="Birren B.W."/>
            <person name="Hood L."/>
            <person name="Lander E.S."/>
            <person name="Nusbaum C."/>
        </authorList>
    </citation>
    <scope>NUCLEOTIDE SEQUENCE [LARGE SCALE GENOMIC DNA]</scope>
</reference>
<reference key="2">
    <citation type="journal article" date="2004" name="Genome Res.">
        <title>The status, quality, and expansion of the NIH full-length cDNA project: the Mammalian Gene Collection (MGC).</title>
        <authorList>
            <consortium name="The MGC Project Team"/>
        </authorList>
    </citation>
    <scope>NUCLEOTIDE SEQUENCE [LARGE SCALE MRNA]</scope>
    <scope>VARIANTS ALA-79; SER-347 AND PRO-358</scope>
    <source>
        <tissue>Placenta</tissue>
        <tissue>Testis</tissue>
    </source>
</reference>
<reference key="3">
    <citation type="journal article" date="2013" name="EMBO Rep.">
        <title>Distinct roles for beta-arrestin2 and arrestin-domain-containing proteins in beta2 adrenergic receptor trafficking.</title>
        <authorList>
            <person name="Han S.O."/>
            <person name="Kommaddi R.P."/>
            <person name="Shenoy S.K."/>
        </authorList>
    </citation>
    <scope>INTERACTION WITH ADRB2</scope>
    <scope>SUBCELLULAR LOCATION</scope>
</reference>
<reference key="4">
    <citation type="journal article" date="2009" name="J. Biol. Chem.">
        <title>Thioredoxin-independent regulation of metabolism by the alpha-arrestin proteins.</title>
        <authorList>
            <person name="Patwari P."/>
            <person name="Chutkow W.A."/>
            <person name="Cummings K."/>
            <person name="Verstraeten V.L."/>
            <person name="Lammerding J."/>
            <person name="Schreiter E.R."/>
            <person name="Lee R.T."/>
        </authorList>
    </citation>
    <scope>FUNCTION</scope>
</reference>
<reference key="5">
    <citation type="journal article" date="2011" name="Cell Metab.">
        <title>The arrestin domain-containing 3 protein regulates body mass and energy expenditure.</title>
        <authorList>
            <person name="Patwari P."/>
            <person name="Emilsson V."/>
            <person name="Schadt E.E."/>
            <person name="Chutkow W.A."/>
            <person name="Lee S."/>
            <person name="Marsili A."/>
            <person name="Zhang Y."/>
            <person name="Dobrin R."/>
            <person name="Cohen D.E."/>
            <person name="Larsen P.R."/>
            <person name="Zavacki A.M."/>
            <person name="Fong L.G."/>
            <person name="Young S.G."/>
            <person name="Lee R.T."/>
        </authorList>
    </citation>
    <scope>INTERACTION WITH ADRB2</scope>
</reference>
<reference key="6">
    <citation type="journal article" date="2012" name="PLoS ONE">
        <title>Mammalian alpha arrestins link activated seven transmembrane receptors to Nedd4 family e3 ubiquitin ligases and interact with beta arrestins.</title>
        <authorList>
            <person name="Shea F.F."/>
            <person name="Rowell J.L."/>
            <person name="Li Y."/>
            <person name="Chang T.H."/>
            <person name="Alvarez C.E."/>
        </authorList>
    </citation>
    <scope>SUBCELLULAR LOCATION</scope>
    <scope>INTERACTION WITH AVPR2; ITCH; NEDD4L AND WWP2</scope>
    <scope>IDENTIFICATION IN A COMPLEX WITH AVPR2 AND HGS</scope>
</reference>
<reference key="7">
    <citation type="journal article" date="2017" name="Cell Death Dis.">
        <title>ARRDC4 regulates enterovirus 71-induced innate immune response by promoting K63 polyubiquitination of MDA5 through TRIM65.</title>
        <authorList>
            <person name="Meng J."/>
            <person name="Yao Z."/>
            <person name="He Y."/>
            <person name="Zhang R."/>
            <person name="Zhang Y."/>
            <person name="Yao X."/>
            <person name="Yang H."/>
            <person name="Chen L."/>
            <person name="Zhang Z."/>
            <person name="Zhang H."/>
            <person name="Bao X."/>
            <person name="Hu G."/>
            <person name="Wu T."/>
            <person name="Cheng J."/>
        </authorList>
    </citation>
    <scope>FUNCTION</scope>
    <scope>INTERACTION WITH TRIM65</scope>
</reference>